<gene>
    <name evidence="1" type="primary">nadE</name>
    <name type="ordered locus">Sama_1552</name>
</gene>
<name>NADE_SHEAM</name>
<evidence type="ECO:0000255" key="1">
    <source>
        <dbReference type="HAMAP-Rule" id="MF_00193"/>
    </source>
</evidence>
<sequence length="276" mass="30383">MKGQILREMRVLKAITPDFEVQRRVAFIKAKLREAHSKTLVLGISGGVDSSVAGRLCQLAVNELNQETDSQQYRFIAVRLPYLVQKDEHEAQMACEFIQPSKLVTVNVGSGSDGIHTETLTGFKAAGLELPEASKVDFVKGNVKARMRMIAQYEIAGLTGGLVVGTDHSAENITGFYTKWGDGACDLAPLFGLNKRQVRQIARYLGAPDVLVVKAPTADLECHRPGLEDEVALGLTYDQIDDFLEGKEVPRSAEDKLIGIYKATQHKRQPIPTIYD</sequence>
<reference key="1">
    <citation type="submission" date="2006-12" db="EMBL/GenBank/DDBJ databases">
        <title>Complete sequence of Shewanella amazonensis SB2B.</title>
        <authorList>
            <consortium name="US DOE Joint Genome Institute"/>
            <person name="Copeland A."/>
            <person name="Lucas S."/>
            <person name="Lapidus A."/>
            <person name="Barry K."/>
            <person name="Detter J.C."/>
            <person name="Glavina del Rio T."/>
            <person name="Hammon N."/>
            <person name="Israni S."/>
            <person name="Dalin E."/>
            <person name="Tice H."/>
            <person name="Pitluck S."/>
            <person name="Munk A.C."/>
            <person name="Brettin T."/>
            <person name="Bruce D."/>
            <person name="Han C."/>
            <person name="Tapia R."/>
            <person name="Gilna P."/>
            <person name="Schmutz J."/>
            <person name="Larimer F."/>
            <person name="Land M."/>
            <person name="Hauser L."/>
            <person name="Kyrpides N."/>
            <person name="Mikhailova N."/>
            <person name="Fredrickson J."/>
            <person name="Richardson P."/>
        </authorList>
    </citation>
    <scope>NUCLEOTIDE SEQUENCE [LARGE SCALE GENOMIC DNA]</scope>
    <source>
        <strain>ATCC BAA-1098 / SB2B</strain>
    </source>
</reference>
<protein>
    <recommendedName>
        <fullName evidence="1">NH(3)-dependent NAD(+) synthetase</fullName>
        <ecNumber evidence="1">6.3.1.5</ecNumber>
    </recommendedName>
</protein>
<organism>
    <name type="scientific">Shewanella amazonensis (strain ATCC BAA-1098 / SB2B)</name>
    <dbReference type="NCBI Taxonomy" id="326297"/>
    <lineage>
        <taxon>Bacteria</taxon>
        <taxon>Pseudomonadati</taxon>
        <taxon>Pseudomonadota</taxon>
        <taxon>Gammaproteobacteria</taxon>
        <taxon>Alteromonadales</taxon>
        <taxon>Shewanellaceae</taxon>
        <taxon>Shewanella</taxon>
    </lineage>
</organism>
<dbReference type="EC" id="6.3.1.5" evidence="1"/>
<dbReference type="EMBL" id="CP000507">
    <property type="protein sequence ID" value="ABL99759.1"/>
    <property type="molecule type" value="Genomic_DNA"/>
</dbReference>
<dbReference type="RefSeq" id="WP_011759667.1">
    <property type="nucleotide sequence ID" value="NC_008700.1"/>
</dbReference>
<dbReference type="SMR" id="A1S5V3"/>
<dbReference type="STRING" id="326297.Sama_1552"/>
<dbReference type="KEGG" id="saz:Sama_1552"/>
<dbReference type="eggNOG" id="COG0171">
    <property type="taxonomic scope" value="Bacteria"/>
</dbReference>
<dbReference type="HOGENOM" id="CLU_059327_3_0_6"/>
<dbReference type="OrthoDB" id="3266517at2"/>
<dbReference type="UniPathway" id="UPA00253">
    <property type="reaction ID" value="UER00333"/>
</dbReference>
<dbReference type="Proteomes" id="UP000009175">
    <property type="component" value="Chromosome"/>
</dbReference>
<dbReference type="GO" id="GO:0005737">
    <property type="term" value="C:cytoplasm"/>
    <property type="evidence" value="ECO:0007669"/>
    <property type="project" value="InterPro"/>
</dbReference>
<dbReference type="GO" id="GO:0005524">
    <property type="term" value="F:ATP binding"/>
    <property type="evidence" value="ECO:0007669"/>
    <property type="project" value="UniProtKB-UniRule"/>
</dbReference>
<dbReference type="GO" id="GO:0004359">
    <property type="term" value="F:glutaminase activity"/>
    <property type="evidence" value="ECO:0007669"/>
    <property type="project" value="InterPro"/>
</dbReference>
<dbReference type="GO" id="GO:0046872">
    <property type="term" value="F:metal ion binding"/>
    <property type="evidence" value="ECO:0007669"/>
    <property type="project" value="UniProtKB-KW"/>
</dbReference>
<dbReference type="GO" id="GO:0003952">
    <property type="term" value="F:NAD+ synthase (glutamine-hydrolyzing) activity"/>
    <property type="evidence" value="ECO:0007669"/>
    <property type="project" value="InterPro"/>
</dbReference>
<dbReference type="GO" id="GO:0008795">
    <property type="term" value="F:NAD+ synthase activity"/>
    <property type="evidence" value="ECO:0007669"/>
    <property type="project" value="UniProtKB-UniRule"/>
</dbReference>
<dbReference type="GO" id="GO:0009435">
    <property type="term" value="P:NAD biosynthetic process"/>
    <property type="evidence" value="ECO:0007669"/>
    <property type="project" value="UniProtKB-UniRule"/>
</dbReference>
<dbReference type="CDD" id="cd00553">
    <property type="entry name" value="NAD_synthase"/>
    <property type="match status" value="1"/>
</dbReference>
<dbReference type="FunFam" id="3.40.50.620:FF:000015">
    <property type="entry name" value="NH(3)-dependent NAD(+) synthetase"/>
    <property type="match status" value="1"/>
</dbReference>
<dbReference type="Gene3D" id="3.40.50.620">
    <property type="entry name" value="HUPs"/>
    <property type="match status" value="1"/>
</dbReference>
<dbReference type="HAMAP" id="MF_00193">
    <property type="entry name" value="NadE_ammonia_dep"/>
    <property type="match status" value="1"/>
</dbReference>
<dbReference type="InterPro" id="IPR022310">
    <property type="entry name" value="NAD/GMP_synthase"/>
</dbReference>
<dbReference type="InterPro" id="IPR003694">
    <property type="entry name" value="NAD_synthase"/>
</dbReference>
<dbReference type="InterPro" id="IPR022926">
    <property type="entry name" value="NH(3)-dep_NAD(+)_synth"/>
</dbReference>
<dbReference type="InterPro" id="IPR014729">
    <property type="entry name" value="Rossmann-like_a/b/a_fold"/>
</dbReference>
<dbReference type="NCBIfam" id="TIGR00552">
    <property type="entry name" value="nadE"/>
    <property type="match status" value="1"/>
</dbReference>
<dbReference type="NCBIfam" id="NF001979">
    <property type="entry name" value="PRK00768.1"/>
    <property type="match status" value="1"/>
</dbReference>
<dbReference type="PANTHER" id="PTHR23090">
    <property type="entry name" value="NH 3 /GLUTAMINE-DEPENDENT NAD + SYNTHETASE"/>
    <property type="match status" value="1"/>
</dbReference>
<dbReference type="PANTHER" id="PTHR23090:SF7">
    <property type="entry name" value="NH(3)-DEPENDENT NAD(+) SYNTHETASE"/>
    <property type="match status" value="1"/>
</dbReference>
<dbReference type="Pfam" id="PF02540">
    <property type="entry name" value="NAD_synthase"/>
    <property type="match status" value="1"/>
</dbReference>
<dbReference type="SUPFAM" id="SSF52402">
    <property type="entry name" value="Adenine nucleotide alpha hydrolases-like"/>
    <property type="match status" value="1"/>
</dbReference>
<accession>A1S5V3</accession>
<proteinExistence type="inferred from homology"/>
<comment type="function">
    <text evidence="1">Catalyzes the ATP-dependent amidation of deamido-NAD to form NAD. Uses ammonia as a nitrogen source.</text>
</comment>
<comment type="catalytic activity">
    <reaction evidence="1">
        <text>deamido-NAD(+) + NH4(+) + ATP = AMP + diphosphate + NAD(+) + H(+)</text>
        <dbReference type="Rhea" id="RHEA:21188"/>
        <dbReference type="ChEBI" id="CHEBI:15378"/>
        <dbReference type="ChEBI" id="CHEBI:28938"/>
        <dbReference type="ChEBI" id="CHEBI:30616"/>
        <dbReference type="ChEBI" id="CHEBI:33019"/>
        <dbReference type="ChEBI" id="CHEBI:57540"/>
        <dbReference type="ChEBI" id="CHEBI:58437"/>
        <dbReference type="ChEBI" id="CHEBI:456215"/>
        <dbReference type="EC" id="6.3.1.5"/>
    </reaction>
</comment>
<comment type="pathway">
    <text evidence="1">Cofactor biosynthesis; NAD(+) biosynthesis; NAD(+) from deamido-NAD(+) (ammonia route): step 1/1.</text>
</comment>
<comment type="subunit">
    <text evidence="1">Homodimer.</text>
</comment>
<comment type="similarity">
    <text evidence="1">Belongs to the NAD synthetase family.</text>
</comment>
<keyword id="KW-0067">ATP-binding</keyword>
<keyword id="KW-0436">Ligase</keyword>
<keyword id="KW-0460">Magnesium</keyword>
<keyword id="KW-0479">Metal-binding</keyword>
<keyword id="KW-0520">NAD</keyword>
<keyword id="KW-0547">Nucleotide-binding</keyword>
<keyword id="KW-1185">Reference proteome</keyword>
<feature type="chain" id="PRO_1000077597" description="NH(3)-dependent NAD(+) synthetase">
    <location>
        <begin position="1"/>
        <end position="276"/>
    </location>
</feature>
<feature type="binding site" evidence="1">
    <location>
        <begin position="43"/>
        <end position="50"/>
    </location>
    <ligand>
        <name>ATP</name>
        <dbReference type="ChEBI" id="CHEBI:30616"/>
    </ligand>
</feature>
<feature type="binding site" evidence="1">
    <location>
        <position position="49"/>
    </location>
    <ligand>
        <name>Mg(2+)</name>
        <dbReference type="ChEBI" id="CHEBI:18420"/>
    </ligand>
</feature>
<feature type="binding site" evidence="1">
    <location>
        <position position="146"/>
    </location>
    <ligand>
        <name>deamido-NAD(+)</name>
        <dbReference type="ChEBI" id="CHEBI:58437"/>
    </ligand>
</feature>
<feature type="binding site" evidence="1">
    <location>
        <position position="166"/>
    </location>
    <ligand>
        <name>ATP</name>
        <dbReference type="ChEBI" id="CHEBI:30616"/>
    </ligand>
</feature>
<feature type="binding site" evidence="1">
    <location>
        <position position="171"/>
    </location>
    <ligand>
        <name>Mg(2+)</name>
        <dbReference type="ChEBI" id="CHEBI:18420"/>
    </ligand>
</feature>
<feature type="binding site" evidence="1">
    <location>
        <position position="179"/>
    </location>
    <ligand>
        <name>deamido-NAD(+)</name>
        <dbReference type="ChEBI" id="CHEBI:58437"/>
    </ligand>
</feature>
<feature type="binding site" evidence="1">
    <location>
        <position position="186"/>
    </location>
    <ligand>
        <name>deamido-NAD(+)</name>
        <dbReference type="ChEBI" id="CHEBI:58437"/>
    </ligand>
</feature>
<feature type="binding site" evidence="1">
    <location>
        <position position="195"/>
    </location>
    <ligand>
        <name>ATP</name>
        <dbReference type="ChEBI" id="CHEBI:30616"/>
    </ligand>
</feature>
<feature type="binding site" evidence="1">
    <location>
        <position position="217"/>
    </location>
    <ligand>
        <name>ATP</name>
        <dbReference type="ChEBI" id="CHEBI:30616"/>
    </ligand>
</feature>
<feature type="binding site" evidence="1">
    <location>
        <begin position="266"/>
        <end position="267"/>
    </location>
    <ligand>
        <name>deamido-NAD(+)</name>
        <dbReference type="ChEBI" id="CHEBI:58437"/>
    </ligand>
</feature>